<accession>B4T1X2</accession>
<sequence>MARKTLRARRFFSLIFPFFFITSVYAEQTPESAKTVTVEAKNEMFAPQHPDQYQSWKATSEQSAREDALAEDPRLVILWAGYPFSRDYNKPRGHAYAVTDVRETLRTGAPKTAEDGPLPMACWSCKSPDVARLIQQEGEDGYFHGKWARGGPEIVNDLGCADCHNTASDDFAQGKPALTLSRPYAERAMEAIGKPFDKAGRFDQQSMVCGQCHVEYYFDGKNKAVKFPWDEGMKVENMEQYYDAIAFSDWTNSLSKTPMLKAQHPEYETWSAGIHGKNNVTCIDCHMPKVQNAEGKLYTDHKIGNPFDNFAQTCANCHTQDKASLQKVVAERKQAIHDLKIKVEDQLVHAHFEAKAAWDAGATDAEMKPILNDIRHAQWRWDLAIASHGIHMHAPEEGLRMLGSAMDKAADARTKLARLLATKGITHEIPLPDISTKEKAQKAIGLNMQQINAEKQDFLKTVVPQWEDQARKNGLLSQ</sequence>
<organism>
    <name type="scientific">Salmonella newport (strain SL254)</name>
    <dbReference type="NCBI Taxonomy" id="423368"/>
    <lineage>
        <taxon>Bacteria</taxon>
        <taxon>Pseudomonadati</taxon>
        <taxon>Pseudomonadota</taxon>
        <taxon>Gammaproteobacteria</taxon>
        <taxon>Enterobacterales</taxon>
        <taxon>Enterobacteriaceae</taxon>
        <taxon>Salmonella</taxon>
    </lineage>
</organism>
<proteinExistence type="inferred from homology"/>
<comment type="function">
    <text evidence="1">Catalyzes the reduction of nitrite to ammonia, consuming six electrons in the process.</text>
</comment>
<comment type="catalytic activity">
    <reaction evidence="1">
        <text>6 Fe(III)-[cytochrome c] + NH4(+) + 2 H2O = 6 Fe(II)-[cytochrome c] + nitrite + 8 H(+)</text>
        <dbReference type="Rhea" id="RHEA:13089"/>
        <dbReference type="Rhea" id="RHEA-COMP:10350"/>
        <dbReference type="Rhea" id="RHEA-COMP:14399"/>
        <dbReference type="ChEBI" id="CHEBI:15377"/>
        <dbReference type="ChEBI" id="CHEBI:15378"/>
        <dbReference type="ChEBI" id="CHEBI:16301"/>
        <dbReference type="ChEBI" id="CHEBI:28938"/>
        <dbReference type="ChEBI" id="CHEBI:29033"/>
        <dbReference type="ChEBI" id="CHEBI:29034"/>
        <dbReference type="EC" id="1.7.2.2"/>
    </reaction>
</comment>
<comment type="cofactor">
    <cofactor evidence="1">
        <name>Ca(2+)</name>
        <dbReference type="ChEBI" id="CHEBI:29108"/>
    </cofactor>
    <text evidence="1">Binds 1 Ca(2+) ion per monomer.</text>
</comment>
<comment type="cofactor">
    <cofactor evidence="1">
        <name>heme c</name>
        <dbReference type="ChEBI" id="CHEBI:61717"/>
    </cofactor>
    <text evidence="1">Binds 5 heme c groups covalently per monomer.</text>
</comment>
<comment type="pathway">
    <text evidence="1">Nitrogen metabolism; nitrate reduction (assimilation).</text>
</comment>
<comment type="subcellular location">
    <subcellularLocation>
        <location evidence="1">Periplasm</location>
    </subcellularLocation>
</comment>
<comment type="similarity">
    <text evidence="1">Belongs to the cytochrome c-552 family.</text>
</comment>
<name>NRFA_SALNS</name>
<gene>
    <name evidence="1" type="primary">nrfA</name>
    <name type="ordered locus">SNSL254_A4622</name>
</gene>
<keyword id="KW-0106">Calcium</keyword>
<keyword id="KW-0249">Electron transport</keyword>
<keyword id="KW-0349">Heme</keyword>
<keyword id="KW-0408">Iron</keyword>
<keyword id="KW-0479">Metal-binding</keyword>
<keyword id="KW-0560">Oxidoreductase</keyword>
<keyword id="KW-0574">Periplasm</keyword>
<keyword id="KW-0732">Signal</keyword>
<keyword id="KW-0813">Transport</keyword>
<dbReference type="EC" id="1.7.2.2" evidence="1"/>
<dbReference type="EMBL" id="CP001113">
    <property type="protein sequence ID" value="ACF62061.1"/>
    <property type="molecule type" value="Genomic_DNA"/>
</dbReference>
<dbReference type="RefSeq" id="WP_000101770.1">
    <property type="nucleotide sequence ID" value="NZ_CCMR01000003.1"/>
</dbReference>
<dbReference type="SMR" id="B4T1X2"/>
<dbReference type="KEGG" id="see:SNSL254_A4622"/>
<dbReference type="HOGENOM" id="CLU_035040_1_0_6"/>
<dbReference type="UniPathway" id="UPA00653"/>
<dbReference type="Proteomes" id="UP000008824">
    <property type="component" value="Chromosome"/>
</dbReference>
<dbReference type="GO" id="GO:0030288">
    <property type="term" value="C:outer membrane-bounded periplasmic space"/>
    <property type="evidence" value="ECO:0007669"/>
    <property type="project" value="TreeGrafter"/>
</dbReference>
<dbReference type="GO" id="GO:0005509">
    <property type="term" value="F:calcium ion binding"/>
    <property type="evidence" value="ECO:0007669"/>
    <property type="project" value="UniProtKB-UniRule"/>
</dbReference>
<dbReference type="GO" id="GO:0020037">
    <property type="term" value="F:heme binding"/>
    <property type="evidence" value="ECO:0007669"/>
    <property type="project" value="InterPro"/>
</dbReference>
<dbReference type="GO" id="GO:0005506">
    <property type="term" value="F:iron ion binding"/>
    <property type="evidence" value="ECO:0007669"/>
    <property type="project" value="UniProtKB-UniRule"/>
</dbReference>
<dbReference type="GO" id="GO:0042279">
    <property type="term" value="F:nitrite reductase (cytochrome, ammonia-forming) activity"/>
    <property type="evidence" value="ECO:0007669"/>
    <property type="project" value="UniProtKB-UniRule"/>
</dbReference>
<dbReference type="GO" id="GO:0019645">
    <property type="term" value="P:anaerobic electron transport chain"/>
    <property type="evidence" value="ECO:0007669"/>
    <property type="project" value="TreeGrafter"/>
</dbReference>
<dbReference type="GO" id="GO:0042128">
    <property type="term" value="P:nitrate assimilation"/>
    <property type="evidence" value="ECO:0007669"/>
    <property type="project" value="UniProtKB-UniRule"/>
</dbReference>
<dbReference type="CDD" id="cd00548">
    <property type="entry name" value="NrfA-like"/>
    <property type="match status" value="1"/>
</dbReference>
<dbReference type="FunFam" id="1.10.1130.10:FF:000002">
    <property type="entry name" value="Cytochrome c-552"/>
    <property type="match status" value="1"/>
</dbReference>
<dbReference type="FunFam" id="1.20.140.10:FF:000014">
    <property type="entry name" value="Cytochrome c-552"/>
    <property type="match status" value="1"/>
</dbReference>
<dbReference type="Gene3D" id="1.20.140.10">
    <property type="entry name" value="Butyryl-CoA Dehydrogenase, subunit A, domain 3"/>
    <property type="match status" value="1"/>
</dbReference>
<dbReference type="Gene3D" id="1.10.1130.10">
    <property type="entry name" value="Flavocytochrome C3, Chain A"/>
    <property type="match status" value="1"/>
</dbReference>
<dbReference type="HAMAP" id="MF_01182">
    <property type="entry name" value="Cytochrom_C552"/>
    <property type="match status" value="1"/>
</dbReference>
<dbReference type="InterPro" id="IPR003321">
    <property type="entry name" value="Cyt_c552"/>
</dbReference>
<dbReference type="InterPro" id="IPR017570">
    <property type="entry name" value="Cyt_c_NO2Rdtase_formate-dep"/>
</dbReference>
<dbReference type="InterPro" id="IPR036280">
    <property type="entry name" value="Multihaem_cyt_sf"/>
</dbReference>
<dbReference type="NCBIfam" id="TIGR03152">
    <property type="entry name" value="cyto_c552_HCOOH"/>
    <property type="match status" value="1"/>
</dbReference>
<dbReference type="NCBIfam" id="NF008339">
    <property type="entry name" value="PRK11125.1"/>
    <property type="match status" value="1"/>
</dbReference>
<dbReference type="PANTHER" id="PTHR30633:SF0">
    <property type="entry name" value="CYTOCHROME C-552"/>
    <property type="match status" value="1"/>
</dbReference>
<dbReference type="PANTHER" id="PTHR30633">
    <property type="entry name" value="CYTOCHROME C-552 RESPIRATORY NITRITE REDUCTASE"/>
    <property type="match status" value="1"/>
</dbReference>
<dbReference type="Pfam" id="PF02335">
    <property type="entry name" value="Cytochrom_C552"/>
    <property type="match status" value="1"/>
</dbReference>
<dbReference type="PIRSF" id="PIRSF000243">
    <property type="entry name" value="Cyt_c552"/>
    <property type="match status" value="1"/>
</dbReference>
<dbReference type="SUPFAM" id="SSF48695">
    <property type="entry name" value="Multiheme cytochromes"/>
    <property type="match status" value="1"/>
</dbReference>
<dbReference type="PROSITE" id="PS51008">
    <property type="entry name" value="MULTIHEME_CYTC"/>
    <property type="match status" value="1"/>
</dbReference>
<feature type="signal peptide" evidence="1">
    <location>
        <begin position="1"/>
        <end position="26"/>
    </location>
</feature>
<feature type="chain" id="PRO_1000138220" description="Cytochrome c-552">
    <location>
        <begin position="27"/>
        <end position="478"/>
    </location>
</feature>
<feature type="binding site" description="axial binding residue" evidence="1">
    <location>
        <position position="94"/>
    </location>
    <ligand>
        <name>heme c</name>
        <dbReference type="ChEBI" id="CHEBI:61717"/>
        <label>3</label>
    </ligand>
    <ligandPart>
        <name>Fe</name>
        <dbReference type="ChEBI" id="CHEBI:18248"/>
    </ligandPart>
</feature>
<feature type="binding site" description="covalent" evidence="1">
    <location>
        <position position="122"/>
    </location>
    <ligand>
        <name>heme</name>
        <dbReference type="ChEBI" id="CHEBI:30413"/>
        <label>1</label>
    </ligand>
</feature>
<feature type="binding site" description="covalent" evidence="1">
    <location>
        <position position="125"/>
    </location>
    <ligand>
        <name>heme</name>
        <dbReference type="ChEBI" id="CHEBI:30413"/>
        <label>1</label>
    </ligand>
</feature>
<feature type="binding site" description="axial binding residue" evidence="1">
    <location>
        <position position="126"/>
    </location>
    <ligand>
        <name>heme</name>
        <dbReference type="ChEBI" id="CHEBI:30413"/>
        <label>1</label>
    </ligand>
    <ligandPart>
        <name>Fe</name>
        <dbReference type="ChEBI" id="CHEBI:18248"/>
    </ligandPart>
</feature>
<feature type="binding site" description="covalent" evidence="1">
    <location>
        <position position="160"/>
    </location>
    <ligand>
        <name>heme c</name>
        <dbReference type="ChEBI" id="CHEBI:61717"/>
        <label>2</label>
    </ligand>
</feature>
<feature type="binding site" description="covalent" evidence="1">
    <location>
        <position position="163"/>
    </location>
    <ligand>
        <name>heme c</name>
        <dbReference type="ChEBI" id="CHEBI:61717"/>
        <label>2</label>
    </ligand>
</feature>
<feature type="binding site" description="axial binding residue" evidence="1">
    <location>
        <position position="164"/>
    </location>
    <ligand>
        <name>heme c</name>
        <dbReference type="ChEBI" id="CHEBI:61717"/>
        <label>2</label>
    </ligand>
    <ligandPart>
        <name>Fe</name>
        <dbReference type="ChEBI" id="CHEBI:18248"/>
    </ligandPart>
</feature>
<feature type="binding site" description="covalent" evidence="1">
    <location>
        <position position="209"/>
    </location>
    <ligand>
        <name>heme c</name>
        <dbReference type="ChEBI" id="CHEBI:61717"/>
        <label>3</label>
    </ligand>
</feature>
<feature type="binding site" description="covalent" evidence="1">
    <location>
        <position position="212"/>
    </location>
    <ligand>
        <name>heme c</name>
        <dbReference type="ChEBI" id="CHEBI:61717"/>
        <label>3</label>
    </ligand>
</feature>
<feature type="binding site" description="axial binding residue" evidence="1">
    <location>
        <position position="213"/>
    </location>
    <ligand>
        <name>heme c</name>
        <dbReference type="ChEBI" id="CHEBI:61717"/>
        <label>3</label>
    </ligand>
    <ligandPart>
        <name>Fe</name>
        <dbReference type="ChEBI" id="CHEBI:18248"/>
    </ligandPart>
</feature>
<feature type="binding site" evidence="1">
    <location>
        <position position="215"/>
    </location>
    <ligand>
        <name>Ca(2+)</name>
        <dbReference type="ChEBI" id="CHEBI:29108"/>
    </ligand>
</feature>
<feature type="binding site" evidence="1">
    <location>
        <position position="216"/>
    </location>
    <ligand>
        <name>Ca(2+)</name>
        <dbReference type="ChEBI" id="CHEBI:29108"/>
    </ligand>
</feature>
<feature type="binding site" evidence="1">
    <location>
        <position position="216"/>
    </location>
    <ligand>
        <name>substrate</name>
    </ligand>
</feature>
<feature type="binding site" evidence="1">
    <location>
        <position position="261"/>
    </location>
    <ligand>
        <name>Ca(2+)</name>
        <dbReference type="ChEBI" id="CHEBI:29108"/>
    </ligand>
</feature>
<feature type="binding site" evidence="1">
    <location>
        <position position="263"/>
    </location>
    <ligand>
        <name>Ca(2+)</name>
        <dbReference type="ChEBI" id="CHEBI:29108"/>
    </ligand>
</feature>
<feature type="binding site" evidence="1">
    <location>
        <position position="264"/>
    </location>
    <ligand>
        <name>substrate</name>
    </ligand>
</feature>
<feature type="binding site" description="axial binding residue" evidence="1">
    <location>
        <position position="275"/>
    </location>
    <ligand>
        <name>heme c</name>
        <dbReference type="ChEBI" id="CHEBI:61717"/>
        <label>5</label>
    </ligand>
    <ligandPart>
        <name>Fe</name>
        <dbReference type="ChEBI" id="CHEBI:18248"/>
    </ligandPart>
</feature>
<feature type="binding site" description="covalent" evidence="1">
    <location>
        <position position="282"/>
    </location>
    <ligand>
        <name>heme c</name>
        <dbReference type="ChEBI" id="CHEBI:61717"/>
        <label>4</label>
    </ligand>
</feature>
<feature type="binding site" description="covalent" evidence="1">
    <location>
        <position position="285"/>
    </location>
    <ligand>
        <name>heme c</name>
        <dbReference type="ChEBI" id="CHEBI:61717"/>
        <label>4</label>
    </ligand>
</feature>
<feature type="binding site" description="axial binding residue" evidence="1">
    <location>
        <position position="286"/>
    </location>
    <ligand>
        <name>heme c</name>
        <dbReference type="ChEBI" id="CHEBI:61717"/>
        <label>4</label>
    </ligand>
    <ligandPart>
        <name>Fe</name>
        <dbReference type="ChEBI" id="CHEBI:18248"/>
    </ligandPart>
</feature>
<feature type="binding site" description="axial binding residue" evidence="1">
    <location>
        <position position="301"/>
    </location>
    <ligand>
        <name>heme c</name>
        <dbReference type="ChEBI" id="CHEBI:61717"/>
        <label>2</label>
    </ligand>
    <ligandPart>
        <name>Fe</name>
        <dbReference type="ChEBI" id="CHEBI:18248"/>
    </ligandPart>
</feature>
<feature type="binding site" description="covalent" evidence="1">
    <location>
        <position position="314"/>
    </location>
    <ligand>
        <name>heme c</name>
        <dbReference type="ChEBI" id="CHEBI:61717"/>
        <label>5</label>
    </ligand>
</feature>
<feature type="binding site" description="covalent" evidence="1">
    <location>
        <position position="317"/>
    </location>
    <ligand>
        <name>heme c</name>
        <dbReference type="ChEBI" id="CHEBI:61717"/>
        <label>5</label>
    </ligand>
</feature>
<feature type="binding site" description="axial binding residue" evidence="1">
    <location>
        <position position="318"/>
    </location>
    <ligand>
        <name>heme c</name>
        <dbReference type="ChEBI" id="CHEBI:61717"/>
        <label>5</label>
    </ligand>
    <ligandPart>
        <name>Fe</name>
        <dbReference type="ChEBI" id="CHEBI:18248"/>
    </ligandPart>
</feature>
<feature type="binding site" description="axial binding residue" evidence="1">
    <location>
        <position position="393"/>
    </location>
    <ligand>
        <name>heme c</name>
        <dbReference type="ChEBI" id="CHEBI:61717"/>
        <label>4</label>
    </ligand>
    <ligandPart>
        <name>Fe</name>
        <dbReference type="ChEBI" id="CHEBI:18248"/>
    </ligandPart>
</feature>
<evidence type="ECO:0000255" key="1">
    <source>
        <dbReference type="HAMAP-Rule" id="MF_01182"/>
    </source>
</evidence>
<reference key="1">
    <citation type="journal article" date="2011" name="J. Bacteriol.">
        <title>Comparative genomics of 28 Salmonella enterica isolates: evidence for CRISPR-mediated adaptive sublineage evolution.</title>
        <authorList>
            <person name="Fricke W.F."/>
            <person name="Mammel M.K."/>
            <person name="McDermott P.F."/>
            <person name="Tartera C."/>
            <person name="White D.G."/>
            <person name="Leclerc J.E."/>
            <person name="Ravel J."/>
            <person name="Cebula T.A."/>
        </authorList>
    </citation>
    <scope>NUCLEOTIDE SEQUENCE [LARGE SCALE GENOMIC DNA]</scope>
    <source>
        <strain>SL254</strain>
    </source>
</reference>
<protein>
    <recommendedName>
        <fullName evidence="1">Cytochrome c-552</fullName>
        <ecNumber evidence="1">1.7.2.2</ecNumber>
    </recommendedName>
    <alternativeName>
        <fullName evidence="1">Ammonia-forming cytochrome c nitrite reductase</fullName>
        <shortName evidence="1">Cytochrome c nitrite reductase</shortName>
    </alternativeName>
</protein>